<reference key="1">
    <citation type="journal article" date="1997" name="J. Dent. Res.">
        <title>Cloning and expression analysis of the bovine dentin matrix acidic phosphoprotein gene.</title>
        <authorList>
            <person name="Hirst K.L."/>
            <person name="Ibaraki-O'Connor K."/>
            <person name="Young M.F."/>
            <person name="Dixon M.J."/>
        </authorList>
    </citation>
    <scope>NUCLEOTIDE SEQUENCE [MRNA]</scope>
    <source>
        <tissue>Tooth</tissue>
    </source>
</reference>
<name>DMP1_BOVIN</name>
<feature type="signal peptide" evidence="2">
    <location>
        <begin position="1"/>
        <end position="16"/>
    </location>
</feature>
<feature type="chain" id="PRO_0000021109" description="Dentin matrix acidic phosphoprotein 1">
    <location>
        <begin position="17"/>
        <end position="510"/>
    </location>
</feature>
<feature type="region of interest" description="Disordered" evidence="3">
    <location>
        <begin position="23"/>
        <end position="510"/>
    </location>
</feature>
<feature type="short sequence motif" description="Cell attachment site" evidence="2">
    <location>
        <begin position="364"/>
        <end position="366"/>
    </location>
</feature>
<feature type="compositionally biased region" description="Acidic residues" evidence="3">
    <location>
        <begin position="61"/>
        <end position="77"/>
    </location>
</feature>
<feature type="compositionally biased region" description="Acidic residues" evidence="3">
    <location>
        <begin position="101"/>
        <end position="119"/>
    </location>
</feature>
<feature type="compositionally biased region" description="Basic and acidic residues" evidence="3">
    <location>
        <begin position="123"/>
        <end position="180"/>
    </location>
</feature>
<feature type="compositionally biased region" description="Basic and acidic residues" evidence="3">
    <location>
        <begin position="273"/>
        <end position="288"/>
    </location>
</feature>
<feature type="compositionally biased region" description="Basic and acidic residues" evidence="3">
    <location>
        <begin position="299"/>
        <end position="328"/>
    </location>
</feature>
<feature type="compositionally biased region" description="Polar residues" evidence="3">
    <location>
        <begin position="333"/>
        <end position="343"/>
    </location>
</feature>
<feature type="compositionally biased region" description="Basic and acidic residues" evidence="3">
    <location>
        <begin position="358"/>
        <end position="367"/>
    </location>
</feature>
<feature type="compositionally biased region" description="Basic and acidic residues" evidence="3">
    <location>
        <begin position="407"/>
        <end position="417"/>
    </location>
</feature>
<feature type="compositionally biased region" description="Basic and acidic residues" evidence="3">
    <location>
        <begin position="481"/>
        <end position="499"/>
    </location>
</feature>
<feature type="compositionally biased region" description="Acidic residues" evidence="3">
    <location>
        <begin position="500"/>
        <end position="510"/>
    </location>
</feature>
<feature type="glycosylation site" description="N-linked (GlcNAc...) asparagine" evidence="2">
    <location>
        <position position="351"/>
    </location>
</feature>
<feature type="glycosylation site" description="N-linked (GlcNAc...) asparagine" evidence="2">
    <location>
        <position position="370"/>
    </location>
</feature>
<feature type="glycosylation site" description="N-linked (GlcNAc...) asparagine" evidence="2">
    <location>
        <position position="427"/>
    </location>
</feature>
<feature type="glycosylation site" description="N-linked (GlcNAc...) asparagine" evidence="2">
    <location>
        <position position="464"/>
    </location>
</feature>
<keyword id="KW-0091">Biomineralization</keyword>
<keyword id="KW-0963">Cytoplasm</keyword>
<keyword id="KW-0272">Extracellular matrix</keyword>
<keyword id="KW-0325">Glycoprotein</keyword>
<keyword id="KW-0539">Nucleus</keyword>
<keyword id="KW-0597">Phosphoprotein</keyword>
<keyword id="KW-1185">Reference proteome</keyword>
<keyword id="KW-0964">Secreted</keyword>
<keyword id="KW-0732">Signal</keyword>
<accession>Q95120</accession>
<dbReference type="EMBL" id="U47636">
    <property type="protein sequence ID" value="AAB09412.1"/>
    <property type="molecule type" value="mRNA"/>
</dbReference>
<dbReference type="SMR" id="Q95120"/>
<dbReference type="STRING" id="9913.ENSBTAP00000025468"/>
<dbReference type="GlyCosmos" id="Q95120">
    <property type="glycosylation" value="4 sites, No reported glycans"/>
</dbReference>
<dbReference type="GlyGen" id="Q95120">
    <property type="glycosylation" value="4 sites"/>
</dbReference>
<dbReference type="PaxDb" id="9913-ENSBTAP00000025468"/>
<dbReference type="eggNOG" id="KOG1181">
    <property type="taxonomic scope" value="Eukaryota"/>
</dbReference>
<dbReference type="InParanoid" id="Q95120"/>
<dbReference type="OrthoDB" id="9048789at2759"/>
<dbReference type="Proteomes" id="UP000009136">
    <property type="component" value="Unplaced"/>
</dbReference>
<dbReference type="GO" id="GO:0005737">
    <property type="term" value="C:cytoplasm"/>
    <property type="evidence" value="ECO:0007669"/>
    <property type="project" value="UniProtKB-SubCell"/>
</dbReference>
<dbReference type="GO" id="GO:0031012">
    <property type="term" value="C:extracellular matrix"/>
    <property type="evidence" value="ECO:0000318"/>
    <property type="project" value="GO_Central"/>
</dbReference>
<dbReference type="GO" id="GO:0005576">
    <property type="term" value="C:extracellular region"/>
    <property type="evidence" value="ECO:0007669"/>
    <property type="project" value="UniProtKB-KW"/>
</dbReference>
<dbReference type="GO" id="GO:0005634">
    <property type="term" value="C:nucleus"/>
    <property type="evidence" value="ECO:0007669"/>
    <property type="project" value="UniProtKB-SubCell"/>
</dbReference>
<dbReference type="GO" id="GO:0050840">
    <property type="term" value="F:extracellular matrix binding"/>
    <property type="evidence" value="ECO:0000318"/>
    <property type="project" value="GO_Central"/>
</dbReference>
<dbReference type="GO" id="GO:0031214">
    <property type="term" value="P:biomineral tissue development"/>
    <property type="evidence" value="ECO:0007669"/>
    <property type="project" value="UniProtKB-KW"/>
</dbReference>
<dbReference type="GO" id="GO:0030198">
    <property type="term" value="P:extracellular matrix organization"/>
    <property type="evidence" value="ECO:0000318"/>
    <property type="project" value="GO_Central"/>
</dbReference>
<dbReference type="GO" id="GO:0001503">
    <property type="term" value="P:ossification"/>
    <property type="evidence" value="ECO:0007669"/>
    <property type="project" value="InterPro"/>
</dbReference>
<dbReference type="InterPro" id="IPR009889">
    <property type="entry name" value="DMP1"/>
</dbReference>
<dbReference type="PANTHER" id="PTHR23400">
    <property type="entry name" value="DENTIN MATRIX ACIDIC PHOSPHOPROTEIN 1"/>
    <property type="match status" value="1"/>
</dbReference>
<dbReference type="PANTHER" id="PTHR23400:SF0">
    <property type="entry name" value="DENTIN MATRIX ACIDIC PHOSPHOPROTEIN 1"/>
    <property type="match status" value="1"/>
</dbReference>
<dbReference type="Pfam" id="PF07263">
    <property type="entry name" value="DMP1"/>
    <property type="match status" value="1"/>
</dbReference>
<proteinExistence type="evidence at transcript level"/>
<protein>
    <recommendedName>
        <fullName>Dentin matrix acidic phosphoprotein 1</fullName>
        <shortName>DMP-1</shortName>
        <shortName>Dentin matrix protein 1</shortName>
    </recommendedName>
</protein>
<evidence type="ECO:0000250" key="1"/>
<evidence type="ECO:0000255" key="2"/>
<evidence type="ECO:0000256" key="3">
    <source>
        <dbReference type="SAM" id="MobiDB-lite"/>
    </source>
</evidence>
<gene>
    <name type="primary">DMP1</name>
</gene>
<organism>
    <name type="scientific">Bos taurus</name>
    <name type="common">Bovine</name>
    <dbReference type="NCBI Taxonomy" id="9913"/>
    <lineage>
        <taxon>Eukaryota</taxon>
        <taxon>Metazoa</taxon>
        <taxon>Chordata</taxon>
        <taxon>Craniata</taxon>
        <taxon>Vertebrata</taxon>
        <taxon>Euteleostomi</taxon>
        <taxon>Mammalia</taxon>
        <taxon>Eutheria</taxon>
        <taxon>Laurasiatheria</taxon>
        <taxon>Artiodactyla</taxon>
        <taxon>Ruminantia</taxon>
        <taxon>Pecora</taxon>
        <taxon>Bovidae</taxon>
        <taxon>Bovinae</taxon>
        <taxon>Bos</taxon>
    </lineage>
</organism>
<comment type="function">
    <text evidence="1">May have a dual function during osteoblast differentiation. In the nucleus of undifferentiated osteoblasts, unphosphorylated form acts as a transcriptional component for activation of osteoblast-specific genes like osteocalcin. During the osteoblast to osteocyte transition phase it is phosphorylated and exported into the extracellular matrix, where it regulates nucleation of hydroxyapatite (By similarity).</text>
</comment>
<comment type="subunit">
    <text evidence="1">Interacts with importin alpha.</text>
</comment>
<comment type="subcellular location">
    <subcellularLocation>
        <location evidence="1">Nucleus</location>
    </subcellularLocation>
    <subcellularLocation>
        <location evidence="1">Cytoplasm</location>
    </subcellularLocation>
    <subcellularLocation>
        <location evidence="1">Secreted</location>
        <location evidence="1">Extracellular space</location>
        <location evidence="1">Extracellular matrix</location>
    </subcellularLocation>
    <text evidence="1">In proliferating preosteoblasts it is nuclear, during early maturation stage is cytoplasmic and in mature osteoblast localizes in the mineralized matrix. Export from the nucleus of differentiating osteoblast is triggered by the release of calcium from intracellular stores followed by a massive influx of this pool of calcium into the nucleus (By similarity).</text>
</comment>
<comment type="tissue specificity">
    <text>Expressed in fetal brain, bone and tooth particularly in odontoblast, but not in ameloblast. Not expressed in liver and skin.</text>
</comment>
<comment type="PTM">
    <text evidence="1">Phosphorylated in the cytosol and extracellular matrix and unphosphorylated in the nucleus. Phosphorylation is necessary for nucleocytoplasmic transport and may be catalyzed by a nuclear isoform of CK2 and can be augmented by calcium. Phosphorylated (in vitro) by FAM20C in the extracellular medium at sites within the S-x-E/pS motif (By similarity).</text>
</comment>
<sequence>MKTTILLMFLWGLSCALPVARYQNTESKSSEEWKGHLAQTPTPPLESSESSEESKLSSEEQANEDPSDSTESEEVLGLDDQQHVHRPAGGLSRRGGSEGDNKDDDEDESGDDTFGDDDGGPGPEERRSGGDSRLGSDEDSADTTRSREDSTPQGDEGARDTTSESRDLDREDEGNSRPEGGDSTPDSDSEEHWVGGGSEGDSSHGDGSEFDDEGMQSDDPGAYRSERGNSRISDAGLKSTQSKGDDEEQASTQDSHESPAAAYPRRKFFRKSRLPEEDGRGELDDSRTIEVMSDSTENPDSKEAGLGQSREHSKSESRQESEENRSPEDSQDVQDPSSESSQEVDLPSQENSSESQEEALHESRGDNPDNATSHSREHQADSESSEEDVLDKPSDSESTSTEEQADSESHESLRSSEESPESTEEQNSSSQEGAQTQSRSQESPSEEDDGSDSQDSSRSKEDSNSTESVSSSEEEAQTKNTEVESRKLTVDAYHNKPIGDQDDNDCQDGY</sequence>